<evidence type="ECO:0000250" key="1">
    <source>
        <dbReference type="UniProtKB" id="O95602"/>
    </source>
</evidence>
<evidence type="ECO:0000250" key="2">
    <source>
        <dbReference type="UniProtKB" id="Q9H9Y6"/>
    </source>
</evidence>
<evidence type="ECO:0000255" key="3">
    <source>
        <dbReference type="RuleBase" id="RU000434"/>
    </source>
</evidence>
<evidence type="ECO:0000255" key="4">
    <source>
        <dbReference type="RuleBase" id="RU363031"/>
    </source>
</evidence>
<evidence type="ECO:0000269" key="5">
    <source>
    </source>
</evidence>
<evidence type="ECO:0000305" key="6"/>
<evidence type="ECO:0000312" key="7">
    <source>
        <dbReference type="Proteomes" id="UP000001940"/>
    </source>
</evidence>
<evidence type="ECO:0000312" key="8">
    <source>
        <dbReference type="WormBase" id="F14B4.3"/>
    </source>
</evidence>
<keyword id="KW-0240">DNA-directed RNA polymerase</keyword>
<keyword id="KW-0548">Nucleotidyltransferase</keyword>
<keyword id="KW-0539">Nucleus</keyword>
<keyword id="KW-0597">Phosphoprotein</keyword>
<keyword id="KW-1185">Reference proteome</keyword>
<keyword id="KW-0804">Transcription</keyword>
<keyword id="KW-0808">Transferase</keyword>
<reference evidence="7" key="1">
    <citation type="journal article" date="1998" name="Science">
        <title>Genome sequence of the nematode C. elegans: a platform for investigating biology.</title>
        <authorList>
            <consortium name="The C. elegans sequencing consortium"/>
        </authorList>
    </citation>
    <scope>NUCLEOTIDE SEQUENCE [LARGE SCALE GENOMIC DNA]</scope>
    <source>
        <strain evidence="7">Bristol N2</strain>
    </source>
</reference>
<reference evidence="6" key="2">
    <citation type="journal article" date="2021" name="Nucleic Acids Res.">
        <title>Antisense ribosomal siRNAs inhibit RNA polymerase I-directed transcription in C. elegans.</title>
        <authorList>
            <person name="Liao S."/>
            <person name="Chen X."/>
            <person name="Xu T."/>
            <person name="Jin Q."/>
            <person name="Xu Z."/>
            <person name="Xu D."/>
            <person name="Zhou X."/>
            <person name="Zhu C."/>
            <person name="Guang S."/>
            <person name="Feng X."/>
        </authorList>
    </citation>
    <scope>FUNCTION</scope>
    <scope>ACTIVITY REGULATION</scope>
    <scope>SUBCELLULAR LOCATION</scope>
    <scope>DISRUPTION PHENOTYPE</scope>
</reference>
<organism evidence="7">
    <name type="scientific">Caenorhabditis elegans</name>
    <dbReference type="NCBI Taxonomy" id="6239"/>
    <lineage>
        <taxon>Eukaryota</taxon>
        <taxon>Metazoa</taxon>
        <taxon>Ecdysozoa</taxon>
        <taxon>Nematoda</taxon>
        <taxon>Chromadorea</taxon>
        <taxon>Rhabditida</taxon>
        <taxon>Rhabditina</taxon>
        <taxon>Rhabditomorpha</taxon>
        <taxon>Rhabditoidea</taxon>
        <taxon>Rhabditidae</taxon>
        <taxon>Peloderinae</taxon>
        <taxon>Caenorhabditis</taxon>
    </lineage>
</organism>
<sequence length="1127" mass="127094">MDCDIASYHVDSFDFLVSKGCQFAAQAVPAEKFRLKNGDAVTMKFTSAQLHKPTLDTGAKLTSDTLPLLPAECRQRGLTYAGNLKVGIDVHVNGSRLDIIEIILGKVPIMLRSEGCHLRGMSRKELVVAGEEPIEKGGYFIVNGSEKVIRLLIANRRNFPIAIIRKTFKEKGKLFSEFGVMMRSVKENHTAVMMTLHYLDTGTMQLALQFRREIFYVPLMYIVKALTDKNDAVISAGFKRGRNQDQFYSSCILNMLAQCQEEEILNQEAAIRAIGSRFRVAVSDRVAPWEDDLEAGRFIIRECVLIHLDSDEEKFHTLAYMTQKLIALVKGECAPETPDNPQFQEASVSGHILLLILRERMENIIGMVRRKLEYMSSRKDFILTSAAILKALGNHTGGEITRGMAYFLATGNLVTRVGLALQQESGFSVIAERINQLRFVSHFRAIHRGAFFMEMRTTDVRKLRPEAWGFICPVHTPDGAPCGLLNHVTASCRIVTDLSDNSNVPSLLAELGMYTHKTVALAPPGEELYPVLMNGRFLGYVPITKAASIERYLRCAKVAKDARIPYTSEIALVRRSTDIKNIQTQYPGIYILSDAGRLIRPVRNLAMDAVEHIGTFEQVYLSVVLDPEEAEPGVTMHQELHPSCLFSFAGNLIPFPDHNQSPRNVYQCQMGKQTMGTAVHAWHSRADNKMYRLQFPQQPMLKLEAYEKYEMDEYPLGTNACVAVISYTGYDMEDAMTINKASYQRGFAHGTVIKVERINLVTERERKTIFYRNPREEIKTVGPDGLPIPGRRYFLDEVYYVTFNMETGDFRTHKFHYAEPAYCGLVRIVEQGEGDSGAKHALIQWRIERNPIIGDKFASRHGQKGINSFLWPVESLPFSETGMVPDIIFNPHGFPSRMTIGMMIESMAGKAAATHGENYDASPFVFNEDNTAINHFGELLTKAGYNYYGNETFYSGVDGRQMEMQIFFGIVYYQRLRHMIADKFQVRATGPIDPITHQPVKGRKKGGGIRFGEMERDAIIAHGTSFVLQDRLLNCSDRDVAYACRRCGSLLSVLMSSRAGSHLLKKKRKDDEPLDYTETQRCRTCDKDDQVFLLQVPRVFRYLTAELAAMNVKIKLGIEHPSKVTGS</sequence>
<protein>
    <recommendedName>
        <fullName evidence="6">DNA-directed RNA polymerase I subunit RPA2 homolog</fullName>
        <ecNumber evidence="4">2.7.7.6</ecNumber>
    </recommendedName>
</protein>
<name>RPA2_CAEEL</name>
<gene>
    <name evidence="8" type="primary">rpoa-2</name>
    <name evidence="8" type="ORF">F14B4.3</name>
</gene>
<dbReference type="EC" id="2.7.7.6" evidence="4"/>
<dbReference type="EMBL" id="BX284601">
    <property type="protein sequence ID" value="CAA99827.1"/>
    <property type="molecule type" value="Genomic_DNA"/>
</dbReference>
<dbReference type="PIR" id="T20870">
    <property type="entry name" value="T20870"/>
</dbReference>
<dbReference type="RefSeq" id="NP_492476.1">
    <property type="nucleotide sequence ID" value="NM_060075.7"/>
</dbReference>
<dbReference type="SMR" id="Q27493"/>
<dbReference type="ComplexPortal" id="CPX-8913">
    <property type="entry name" value="DNA-directed RNA polymerase I complex"/>
</dbReference>
<dbReference type="FunCoup" id="Q27493">
    <property type="interactions" value="2241"/>
</dbReference>
<dbReference type="STRING" id="6239.F14B4.3.1"/>
<dbReference type="PaxDb" id="6239-F14B4.3"/>
<dbReference type="PeptideAtlas" id="Q27493"/>
<dbReference type="EnsemblMetazoa" id="F14B4.3.1">
    <property type="protein sequence ID" value="F14B4.3.1"/>
    <property type="gene ID" value="WBGene00008781"/>
</dbReference>
<dbReference type="GeneID" id="172752"/>
<dbReference type="KEGG" id="cel:CELE_F14B4.3"/>
<dbReference type="UCSC" id="F14B4.3">
    <property type="organism name" value="c. elegans"/>
</dbReference>
<dbReference type="AGR" id="WB:WBGene00008781"/>
<dbReference type="CTD" id="172752"/>
<dbReference type="WormBase" id="F14B4.3">
    <property type="protein sequence ID" value="CE05629"/>
    <property type="gene ID" value="WBGene00008781"/>
    <property type="gene designation" value="rpoa-2"/>
</dbReference>
<dbReference type="eggNOG" id="KOG0216">
    <property type="taxonomic scope" value="Eukaryota"/>
</dbReference>
<dbReference type="GeneTree" id="ENSGT00950000183132"/>
<dbReference type="HOGENOM" id="CLU_000524_5_1_1"/>
<dbReference type="InParanoid" id="Q27493"/>
<dbReference type="OMA" id="FFGVVHY"/>
<dbReference type="OrthoDB" id="10248617at2759"/>
<dbReference type="PhylomeDB" id="Q27493"/>
<dbReference type="Reactome" id="R-CEL-5250924">
    <property type="pathway name" value="B-WICH complex positively regulates rRNA expression"/>
</dbReference>
<dbReference type="Reactome" id="R-CEL-73762">
    <property type="pathway name" value="RNA Polymerase I Transcription Initiation"/>
</dbReference>
<dbReference type="Reactome" id="R-CEL-73772">
    <property type="pathway name" value="RNA Polymerase I Promoter Escape"/>
</dbReference>
<dbReference type="PRO" id="PR:Q27493"/>
<dbReference type="Proteomes" id="UP000001940">
    <property type="component" value="Chromosome I"/>
</dbReference>
<dbReference type="Bgee" id="WBGene00008781">
    <property type="expression patterns" value="Expressed in germ line (C elegans) and 4 other cell types or tissues"/>
</dbReference>
<dbReference type="GO" id="GO:0005739">
    <property type="term" value="C:mitochondrion"/>
    <property type="evidence" value="ECO:0007669"/>
    <property type="project" value="GOC"/>
</dbReference>
<dbReference type="GO" id="GO:0005730">
    <property type="term" value="C:nucleolus"/>
    <property type="evidence" value="ECO:0000314"/>
    <property type="project" value="WormBase"/>
</dbReference>
<dbReference type="GO" id="GO:0005736">
    <property type="term" value="C:RNA polymerase I complex"/>
    <property type="evidence" value="ECO:0000318"/>
    <property type="project" value="GO_Central"/>
</dbReference>
<dbReference type="GO" id="GO:0003677">
    <property type="term" value="F:DNA binding"/>
    <property type="evidence" value="ECO:0007669"/>
    <property type="project" value="InterPro"/>
</dbReference>
<dbReference type="GO" id="GO:0003899">
    <property type="term" value="F:DNA-directed RNA polymerase activity"/>
    <property type="evidence" value="ECO:0007669"/>
    <property type="project" value="UniProtKB-EC"/>
</dbReference>
<dbReference type="GO" id="GO:0032549">
    <property type="term" value="F:ribonucleoside binding"/>
    <property type="evidence" value="ECO:0007669"/>
    <property type="project" value="InterPro"/>
</dbReference>
<dbReference type="GO" id="GO:0006351">
    <property type="term" value="P:DNA-templated transcription"/>
    <property type="evidence" value="ECO:0007669"/>
    <property type="project" value="InterPro"/>
</dbReference>
<dbReference type="CDD" id="cd00653">
    <property type="entry name" value="RNA_pol_B_RPB2"/>
    <property type="match status" value="1"/>
</dbReference>
<dbReference type="FunFam" id="2.40.270.10:FF:000006">
    <property type="entry name" value="DNA-directed RNA polymerase subunit beta"/>
    <property type="match status" value="1"/>
</dbReference>
<dbReference type="FunFam" id="2.40.270.10:FF:000011">
    <property type="entry name" value="DNA-directed RNA polymerase subunit beta"/>
    <property type="match status" value="1"/>
</dbReference>
<dbReference type="FunFam" id="3.90.1100.10:FF:000008">
    <property type="entry name" value="DNA-directed RNA polymerase subunit beta"/>
    <property type="match status" value="1"/>
</dbReference>
<dbReference type="FunFam" id="3.90.1100.10:FF:000025">
    <property type="entry name" value="DNA-directed RNA polymerase subunit beta"/>
    <property type="match status" value="1"/>
</dbReference>
<dbReference type="FunFam" id="3.90.1800.10:FF:000010">
    <property type="entry name" value="DNA-directed RNA polymerase subunit beta"/>
    <property type="match status" value="1"/>
</dbReference>
<dbReference type="Gene3D" id="2.40.50.150">
    <property type="match status" value="1"/>
</dbReference>
<dbReference type="Gene3D" id="3.90.1100.10">
    <property type="match status" value="1"/>
</dbReference>
<dbReference type="Gene3D" id="2.40.270.10">
    <property type="entry name" value="DNA-directed RNA polymerase, subunit 2, domain 6"/>
    <property type="match status" value="1"/>
</dbReference>
<dbReference type="Gene3D" id="3.90.1800.10">
    <property type="entry name" value="RNA polymerase alpha subunit dimerisation domain"/>
    <property type="match status" value="1"/>
</dbReference>
<dbReference type="Gene3D" id="3.90.1110.10">
    <property type="entry name" value="RNA polymerase Rpb2, domain 2"/>
    <property type="match status" value="1"/>
</dbReference>
<dbReference type="InterPro" id="IPR015712">
    <property type="entry name" value="DNA-dir_RNA_pol_su2"/>
</dbReference>
<dbReference type="InterPro" id="IPR007120">
    <property type="entry name" value="DNA-dir_RNAP_su2_dom"/>
</dbReference>
<dbReference type="InterPro" id="IPR037033">
    <property type="entry name" value="DNA-dir_RNAP_su2_hyb_sf"/>
</dbReference>
<dbReference type="InterPro" id="IPR007121">
    <property type="entry name" value="RNA_pol_bsu_CS"/>
</dbReference>
<dbReference type="InterPro" id="IPR007644">
    <property type="entry name" value="RNA_pol_bsu_protrusion"/>
</dbReference>
<dbReference type="InterPro" id="IPR007642">
    <property type="entry name" value="RNA_pol_Rpb2_2"/>
</dbReference>
<dbReference type="InterPro" id="IPR037034">
    <property type="entry name" value="RNA_pol_Rpb2_2_sf"/>
</dbReference>
<dbReference type="InterPro" id="IPR007645">
    <property type="entry name" value="RNA_pol_Rpb2_3"/>
</dbReference>
<dbReference type="InterPro" id="IPR007641">
    <property type="entry name" value="RNA_pol_Rpb2_7"/>
</dbReference>
<dbReference type="InterPro" id="IPR014724">
    <property type="entry name" value="RNA_pol_RPB2_OB-fold"/>
</dbReference>
<dbReference type="InterPro" id="IPR009674">
    <property type="entry name" value="Rpa2_dom_4"/>
</dbReference>
<dbReference type="PANTHER" id="PTHR20856">
    <property type="entry name" value="DNA-DIRECTED RNA POLYMERASE I SUBUNIT 2"/>
    <property type="match status" value="1"/>
</dbReference>
<dbReference type="Pfam" id="PF06883">
    <property type="entry name" value="RNA_pol_Rpa2_4"/>
    <property type="match status" value="1"/>
</dbReference>
<dbReference type="Pfam" id="PF04563">
    <property type="entry name" value="RNA_pol_Rpb2_1"/>
    <property type="match status" value="1"/>
</dbReference>
<dbReference type="Pfam" id="PF04561">
    <property type="entry name" value="RNA_pol_Rpb2_2"/>
    <property type="match status" value="1"/>
</dbReference>
<dbReference type="Pfam" id="PF04565">
    <property type="entry name" value="RNA_pol_Rpb2_3"/>
    <property type="match status" value="1"/>
</dbReference>
<dbReference type="Pfam" id="PF00562">
    <property type="entry name" value="RNA_pol_Rpb2_6"/>
    <property type="match status" value="1"/>
</dbReference>
<dbReference type="Pfam" id="PF04560">
    <property type="entry name" value="RNA_pol_Rpb2_7"/>
    <property type="match status" value="1"/>
</dbReference>
<dbReference type="SUPFAM" id="SSF64484">
    <property type="entry name" value="beta and beta-prime subunits of DNA dependent RNA-polymerase"/>
    <property type="match status" value="1"/>
</dbReference>
<dbReference type="PROSITE" id="PS01166">
    <property type="entry name" value="RNA_POL_BETA"/>
    <property type="match status" value="1"/>
</dbReference>
<comment type="function">
    <text evidence="2 5">DNA-dependent RNA polymerase catalyzes the transcription of DNA into RNA using the four ribonucleoside triphosphates as substrates. Second largest core component of RNA polymerase I which synthesizes ribosomal RNA precursors. Proposed to contribute to the polymerase catalytic activity and forms the polymerase active center together with the largest subunit. Pol I is composed of mobile elements and RPA2 is part of the core element with the central large cleft and probably a clamp element that moves to open and close the cleft (By similarity). Specifically binds to 18S, 5.8S and 26S rDNA, but not to 5S rDNA (PubMed:34365510).</text>
</comment>
<comment type="catalytic activity">
    <reaction evidence="2">
        <text>RNA(n) + a ribonucleoside 5'-triphosphate = RNA(n+1) + diphosphate</text>
        <dbReference type="Rhea" id="RHEA:21248"/>
        <dbReference type="Rhea" id="RHEA-COMP:14527"/>
        <dbReference type="Rhea" id="RHEA-COMP:17342"/>
        <dbReference type="ChEBI" id="CHEBI:33019"/>
        <dbReference type="ChEBI" id="CHEBI:61557"/>
        <dbReference type="ChEBI" id="CHEBI:140395"/>
        <dbReference type="EC" id="2.7.7.6"/>
    </reaction>
    <physiologicalReaction direction="left-to-right" evidence="2">
        <dbReference type="Rhea" id="RHEA:21249"/>
    </physiologicalReaction>
</comment>
<comment type="activity regulation">
    <text evidence="5">Antisense ribosomal siRNAs silence rRNA expression during the elongation phase by decreasing rpoa-2 occupancy downstream of the RNAi-targeted region in nrde-2-dependent manner.</text>
</comment>
<comment type="subunit">
    <text evidence="1">Component of the RNA polymerase I (Pol I) complex consisting of at least 13 subunits.</text>
</comment>
<comment type="subcellular location">
    <subcellularLocation>
        <location evidence="5">Nucleus</location>
    </subcellularLocation>
    <subcellularLocation>
        <location evidence="5">Nucleus</location>
        <location evidence="5">Nucleolus</location>
    </subcellularLocation>
    <text evidence="5">In 1- to 8-cell embryos, in which rDNA is not actively transcribed, protein is evenly distributed in the nucleus without significant nucleolar enrichment.</text>
</comment>
<comment type="disruption phenotype">
    <text evidence="5">RNAi-mediated knockdown causes sterility.</text>
</comment>
<comment type="similarity">
    <text evidence="3">Belongs to the RNA polymerase beta chain family.</text>
</comment>
<proteinExistence type="inferred from homology"/>
<feature type="chain" id="PRO_0000459067" description="DNA-directed RNA polymerase I subunit RPA2 homolog">
    <location>
        <begin position="1"/>
        <end position="1127"/>
    </location>
</feature>
<feature type="modified residue" description="Phosphoserine" evidence="2">
    <location>
        <position position="1025"/>
    </location>
</feature>
<accession>Q27493</accession>